<accession>Q2ICQ1</accession>
<organismHost>
    <name type="scientific">Aves</name>
    <dbReference type="NCBI Taxonomy" id="8782"/>
</organismHost>
<organismHost>
    <name type="scientific">Cetacea</name>
    <name type="common">whales</name>
    <dbReference type="NCBI Taxonomy" id="9721"/>
</organismHost>
<organismHost>
    <name type="scientific">Homo sapiens</name>
    <name type="common">Human</name>
    <dbReference type="NCBI Taxonomy" id="9606"/>
</organismHost>
<organismHost>
    <name type="scientific">Phocidae</name>
    <name type="common">true seals</name>
    <dbReference type="NCBI Taxonomy" id="9709"/>
</organismHost>
<organismHost>
    <name type="scientific">Sus scrofa</name>
    <name type="common">Pig</name>
    <dbReference type="NCBI Taxonomy" id="9823"/>
</organismHost>
<dbReference type="EMBL" id="CY008682">
    <property type="protein sequence ID" value="ABD17332.1"/>
    <property type="molecule type" value="Genomic_RNA"/>
</dbReference>
<dbReference type="SMR" id="Q2ICQ1"/>
<dbReference type="Proteomes" id="UP000009189">
    <property type="component" value="Genome"/>
</dbReference>
<dbReference type="GO" id="GO:0044164">
    <property type="term" value="C:host cell cytosol"/>
    <property type="evidence" value="ECO:0007669"/>
    <property type="project" value="UniProtKB-SubCell"/>
</dbReference>
<dbReference type="GO" id="GO:0044192">
    <property type="term" value="C:host cell mitochondrial inner membrane"/>
    <property type="evidence" value="ECO:0007669"/>
    <property type="project" value="UniProtKB-SubCell"/>
</dbReference>
<dbReference type="GO" id="GO:0042025">
    <property type="term" value="C:host cell nucleus"/>
    <property type="evidence" value="ECO:0007669"/>
    <property type="project" value="UniProtKB-SubCell"/>
</dbReference>
<dbReference type="GO" id="GO:0016020">
    <property type="term" value="C:membrane"/>
    <property type="evidence" value="ECO:0007669"/>
    <property type="project" value="UniProtKB-UniRule"/>
</dbReference>
<dbReference type="GO" id="GO:0052150">
    <property type="term" value="P:symbiont-mediated perturbation of host apoptosis"/>
    <property type="evidence" value="ECO:0007669"/>
    <property type="project" value="UniProtKB-KW"/>
</dbReference>
<dbReference type="GO" id="GO:0039545">
    <property type="term" value="P:symbiont-mediated suppression of host cytoplasmic pattern recognition receptor signaling pathway via inhibition of MAVS activity"/>
    <property type="evidence" value="ECO:0007669"/>
    <property type="project" value="UniProtKB-KW"/>
</dbReference>
<dbReference type="HAMAP" id="MF_04064">
    <property type="entry name" value="INFV_PB1F2"/>
    <property type="match status" value="1"/>
</dbReference>
<dbReference type="InterPro" id="IPR021045">
    <property type="entry name" value="Flu_proapoptotic_PB1-F2"/>
</dbReference>
<dbReference type="Pfam" id="PF11986">
    <property type="entry name" value="PB1-F2"/>
    <property type="match status" value="1"/>
</dbReference>
<comment type="function">
    <text evidence="1">Plays an important role in promoting lung pathology in both primary viral infection and secondary bacterial infection. Promotes alteration of mitochondrial morphology, dissipation of mitochondrial membrane potential, and cell death. Alternatively, inhibits the production of interferon in the infected cell at the level of host mitochondrial antiviral signaling MAVS. Its level of expression differs greatly depending on which cell type is infected, in a manner that is independent of the levels of expression of other viral proteins. Monocytic cells are more affected than epithelial cells. Seems to disable virus-infected monocytes or other host innate immune cells. During early stage of infection, predisposes the mitochondria to permeability transition through interaction with host SLC25A6/ANT3 and VDAC1. These proteins participate in the formation of the permeability transition pore complex (PTPC) responsible of the release of mitochondrial products that triggers apoptosis.</text>
</comment>
<comment type="subunit">
    <text evidence="1">Oligomer. Interacts with human SLC25A6/ANT3 and VDAC1. Interacts with host MAVS.</text>
</comment>
<comment type="subcellular location">
    <subcellularLocation>
        <location evidence="1">Host mitochondrion inner membrane</location>
    </subcellularLocation>
    <subcellularLocation>
        <location evidence="1">Host nucleus</location>
    </subcellularLocation>
    <subcellularLocation>
        <location evidence="1">Host cytoplasm</location>
        <location evidence="1">Host cytosol</location>
    </subcellularLocation>
    <text evidence="1">Inner mitochondrial membrane in most cells types. Otherwise is detected in the nucleus and cytosol.</text>
</comment>
<comment type="miscellaneous">
    <text>Is not encoded in all strains, and seems to be dispensable for replication.</text>
</comment>
<comment type="similarity">
    <text evidence="1">Belongs to the influenza viruses PB1-F2 family.</text>
</comment>
<protein>
    <recommendedName>
        <fullName evidence="1">Protein PB1-F2</fullName>
    </recommendedName>
</protein>
<proteinExistence type="inferred from homology"/>
<organism>
    <name type="scientific">Influenza A virus (strain A/Memphis/101/1972 H3N2)</name>
    <dbReference type="NCBI Taxonomy" id="383583"/>
    <lineage>
        <taxon>Viruses</taxon>
        <taxon>Riboviria</taxon>
        <taxon>Orthornavirae</taxon>
        <taxon>Negarnaviricota</taxon>
        <taxon>Polyploviricotina</taxon>
        <taxon>Insthoviricetes</taxon>
        <taxon>Articulavirales</taxon>
        <taxon>Orthomyxoviridae</taxon>
        <taxon>Alphainfluenzavirus</taxon>
        <taxon>Alphainfluenzavirus influenzae</taxon>
        <taxon>Influenza A virus</taxon>
    </lineage>
</organism>
<reference key="1">
    <citation type="submission" date="2006-02" db="EMBL/GenBank/DDBJ databases">
        <title>The NIAID influenza genome sequencing project.</title>
        <authorList>
            <person name="Ghedin E."/>
            <person name="Spiro D."/>
            <person name="Miller N."/>
            <person name="Zaborsky J."/>
            <person name="Feldblyum T."/>
            <person name="Subbu V."/>
            <person name="Shumway M."/>
            <person name="Sparenborg J."/>
            <person name="Groveman L."/>
            <person name="Halpin R."/>
            <person name="Sitz J."/>
            <person name="Koo H."/>
            <person name="Salzberg S.L."/>
            <person name="Webster R.G."/>
            <person name="Hoffmann E."/>
            <person name="Krauss S."/>
            <person name="Naeve C."/>
            <person name="Bao Y."/>
            <person name="Bolotov P."/>
            <person name="Dernovoy D."/>
            <person name="Kiryutin B."/>
            <person name="Lipman D.J."/>
            <person name="Tatusova T."/>
        </authorList>
    </citation>
    <scope>NUCLEOTIDE SEQUENCE [GENOMIC RNA]</scope>
</reference>
<sequence length="90" mass="10693">MEQEQDTPWTQSTEHINIQKKGSGQQTQRLGRPNLTQLMDHYLRIMSQVDMHKQTVSWKQWPSLKNPTQGSLKTRALKRWKSFNKQGWTN</sequence>
<name>PB1F2_I72A4</name>
<gene>
    <name evidence="1" type="primary">PB1</name>
</gene>
<evidence type="ECO:0000255" key="1">
    <source>
        <dbReference type="HAMAP-Rule" id="MF_04064"/>
    </source>
</evidence>
<evidence type="ECO:0000256" key="2">
    <source>
        <dbReference type="SAM" id="MobiDB-lite"/>
    </source>
</evidence>
<keyword id="KW-0053">Apoptosis</keyword>
<keyword id="KW-1035">Host cytoplasm</keyword>
<keyword id="KW-1043">Host membrane</keyword>
<keyword id="KW-1045">Host mitochondrion</keyword>
<keyword id="KW-1046">Host mitochondrion inner membrane</keyword>
<keyword id="KW-1048">Host nucleus</keyword>
<keyword id="KW-0945">Host-virus interaction</keyword>
<keyword id="KW-1090">Inhibition of host innate immune response by virus</keyword>
<keyword id="KW-1097">Inhibition of host MAVS by virus</keyword>
<keyword id="KW-1113">Inhibition of host RLR pathway by virus</keyword>
<keyword id="KW-0472">Membrane</keyword>
<keyword id="KW-1119">Modulation of host cell apoptosis by virus</keyword>
<keyword id="KW-0899">Viral immunoevasion</keyword>
<feature type="chain" id="PRO_0000278717" description="Protein PB1-F2">
    <location>
        <begin position="1"/>
        <end position="90"/>
    </location>
</feature>
<feature type="region of interest" description="Disordered" evidence="2">
    <location>
        <begin position="1"/>
        <end position="31"/>
    </location>
</feature>
<feature type="region of interest" description="Mitochondrial targeting sequence" evidence="1">
    <location>
        <begin position="65"/>
        <end position="87"/>
    </location>
</feature>
<feature type="site" description="Low pathogenicity" evidence="1">
    <location>
        <position position="66"/>
    </location>
</feature>